<reference key="1">
    <citation type="journal article" date="1991" name="J. Mol. Evol.">
        <title>The complete nucleotide sequence of the mitochondrial DNA of the fin whale, Balaenoptera physalus.</title>
        <authorList>
            <person name="Arnason U."/>
            <person name="Gullberg A."/>
            <person name="Widegren B."/>
        </authorList>
    </citation>
    <scope>NUCLEOTIDE SEQUENCE [GENOMIC DNA]</scope>
    <source>
        <strain>Isolate No. 27 / Anno 1987</strain>
        <tissue>Liver</tissue>
    </source>
</reference>
<dbReference type="EC" id="7.1.1.2" evidence="1"/>
<dbReference type="EMBL" id="X61145">
    <property type="protein sequence ID" value="CAA43446.1"/>
    <property type="molecule type" value="Genomic_DNA"/>
</dbReference>
<dbReference type="PIR" id="H58850">
    <property type="entry name" value="H58850"/>
</dbReference>
<dbReference type="RefSeq" id="NP_006896.1">
    <property type="nucleotide sequence ID" value="NC_001321.1"/>
</dbReference>
<dbReference type="SMR" id="P68308"/>
<dbReference type="GeneID" id="807610"/>
<dbReference type="CTD" id="4537"/>
<dbReference type="GO" id="GO:0005743">
    <property type="term" value="C:mitochondrial inner membrane"/>
    <property type="evidence" value="ECO:0000250"/>
    <property type="project" value="UniProtKB"/>
</dbReference>
<dbReference type="GO" id="GO:0030964">
    <property type="term" value="C:NADH dehydrogenase complex"/>
    <property type="evidence" value="ECO:0007669"/>
    <property type="project" value="TreeGrafter"/>
</dbReference>
<dbReference type="GO" id="GO:0008137">
    <property type="term" value="F:NADH dehydrogenase (ubiquinone) activity"/>
    <property type="evidence" value="ECO:0000250"/>
    <property type="project" value="UniProtKB"/>
</dbReference>
<dbReference type="GO" id="GO:0006120">
    <property type="term" value="P:mitochondrial electron transport, NADH to ubiquinone"/>
    <property type="evidence" value="ECO:0000250"/>
    <property type="project" value="UniProtKB"/>
</dbReference>
<dbReference type="FunFam" id="1.20.58.1610:FF:000004">
    <property type="entry name" value="NADH-quinone oxidoreductase subunit A"/>
    <property type="match status" value="1"/>
</dbReference>
<dbReference type="Gene3D" id="1.20.58.1610">
    <property type="entry name" value="NADH:ubiquinone/plastoquinone oxidoreductase, chain 3"/>
    <property type="match status" value="1"/>
</dbReference>
<dbReference type="InterPro" id="IPR000440">
    <property type="entry name" value="NADH_UbQ/plastoQ_OxRdtase_su3"/>
</dbReference>
<dbReference type="InterPro" id="IPR038430">
    <property type="entry name" value="NDAH_ubi_oxred_su3_sf"/>
</dbReference>
<dbReference type="PANTHER" id="PTHR11058">
    <property type="entry name" value="NADH-UBIQUINONE OXIDOREDUCTASE CHAIN 3"/>
    <property type="match status" value="1"/>
</dbReference>
<dbReference type="PANTHER" id="PTHR11058:SF9">
    <property type="entry name" value="NADH-UBIQUINONE OXIDOREDUCTASE CHAIN 3"/>
    <property type="match status" value="1"/>
</dbReference>
<dbReference type="Pfam" id="PF00507">
    <property type="entry name" value="Oxidored_q4"/>
    <property type="match status" value="1"/>
</dbReference>
<sequence>MNLLLTLLTNTTLALLLVFIAFWLPQLNVYAEKTSPYECGFDPMGSARLPFSMKFFLVAITFLLFDLEIALLLPLPWAIQSNNLNTMLTMALFLISLLAASLAYEWTQEGLEWAE</sequence>
<comment type="function">
    <text evidence="1">Core subunit of the mitochondrial membrane respiratory chain NADH dehydrogenase (Complex I) which catalyzes electron transfer from NADH through the respiratory chain, using ubiquinone as an electron acceptor. Essential for the catalytic activity of complex I.</text>
</comment>
<comment type="catalytic activity">
    <reaction evidence="1">
        <text>a ubiquinone + NADH + 5 H(+)(in) = a ubiquinol + NAD(+) + 4 H(+)(out)</text>
        <dbReference type="Rhea" id="RHEA:29091"/>
        <dbReference type="Rhea" id="RHEA-COMP:9565"/>
        <dbReference type="Rhea" id="RHEA-COMP:9566"/>
        <dbReference type="ChEBI" id="CHEBI:15378"/>
        <dbReference type="ChEBI" id="CHEBI:16389"/>
        <dbReference type="ChEBI" id="CHEBI:17976"/>
        <dbReference type="ChEBI" id="CHEBI:57540"/>
        <dbReference type="ChEBI" id="CHEBI:57945"/>
        <dbReference type="EC" id="7.1.1.2"/>
    </reaction>
</comment>
<comment type="subunit">
    <text evidence="1">Core subunit of respiratory chain NADH dehydrogenase (Complex I) which is composed of 45 different subunits. Interacts with TMEM186. Interacts with TMEM242 (By similarity).</text>
</comment>
<comment type="subcellular location">
    <subcellularLocation>
        <location evidence="2">Mitochondrion inner membrane</location>
        <topology evidence="3">Multi-pass membrane protein</topology>
    </subcellularLocation>
</comment>
<comment type="similarity">
    <text evidence="4">Belongs to the complex I subunit 3 family.</text>
</comment>
<organism>
    <name type="scientific">Balaenoptera physalus</name>
    <name type="common">Fin whale</name>
    <name type="synonym">Balaena physalus</name>
    <dbReference type="NCBI Taxonomy" id="9770"/>
    <lineage>
        <taxon>Eukaryota</taxon>
        <taxon>Metazoa</taxon>
        <taxon>Chordata</taxon>
        <taxon>Craniata</taxon>
        <taxon>Vertebrata</taxon>
        <taxon>Euteleostomi</taxon>
        <taxon>Mammalia</taxon>
        <taxon>Eutheria</taxon>
        <taxon>Laurasiatheria</taxon>
        <taxon>Artiodactyla</taxon>
        <taxon>Whippomorpha</taxon>
        <taxon>Cetacea</taxon>
        <taxon>Mysticeti</taxon>
        <taxon>Balaenopteridae</taxon>
        <taxon>Balaenoptera</taxon>
    </lineage>
</organism>
<keyword id="KW-0249">Electron transport</keyword>
<keyword id="KW-0472">Membrane</keyword>
<keyword id="KW-0496">Mitochondrion</keyword>
<keyword id="KW-0999">Mitochondrion inner membrane</keyword>
<keyword id="KW-0520">NAD</keyword>
<keyword id="KW-0679">Respiratory chain</keyword>
<keyword id="KW-1278">Translocase</keyword>
<keyword id="KW-0812">Transmembrane</keyword>
<keyword id="KW-1133">Transmembrane helix</keyword>
<keyword id="KW-0813">Transport</keyword>
<keyword id="KW-0830">Ubiquinone</keyword>
<evidence type="ECO:0000250" key="1">
    <source>
        <dbReference type="UniProtKB" id="P03897"/>
    </source>
</evidence>
<evidence type="ECO:0000250" key="2">
    <source>
        <dbReference type="UniProtKB" id="P03898"/>
    </source>
</evidence>
<evidence type="ECO:0000255" key="3"/>
<evidence type="ECO:0000305" key="4"/>
<protein>
    <recommendedName>
        <fullName evidence="1">NADH-ubiquinone oxidoreductase chain 3</fullName>
        <ecNumber evidence="1">7.1.1.2</ecNumber>
    </recommendedName>
    <alternativeName>
        <fullName>NADH dehydrogenase subunit 3</fullName>
    </alternativeName>
</protein>
<name>NU3M_BALPH</name>
<proteinExistence type="inferred from homology"/>
<gene>
    <name evidence="1" type="primary">MT-ND3</name>
    <name type="synonym">MTND3</name>
    <name type="synonym">NADH3</name>
    <name type="synonym">ND3</name>
</gene>
<feature type="chain" id="PRO_0000117714" description="NADH-ubiquinone oxidoreductase chain 3">
    <location>
        <begin position="1"/>
        <end position="115"/>
    </location>
</feature>
<feature type="transmembrane region" description="Helical" evidence="3">
    <location>
        <begin position="3"/>
        <end position="23"/>
    </location>
</feature>
<feature type="transmembrane region" description="Helical" evidence="3">
    <location>
        <begin position="55"/>
        <end position="75"/>
    </location>
</feature>
<feature type="transmembrane region" description="Helical" evidence="3">
    <location>
        <begin position="84"/>
        <end position="104"/>
    </location>
</feature>
<accession>P68308</accession>
<accession>P24973</accession>
<geneLocation type="mitochondrion"/>